<reference key="1">
    <citation type="submission" date="2007-11" db="EMBL/GenBank/DDBJ databases">
        <title>Complete genome sequence of Clostridium phytofermentans ISDg.</title>
        <authorList>
            <person name="Leschine S.B."/>
            <person name="Warnick T.A."/>
            <person name="Blanchard J.L."/>
            <person name="Schnell D.J."/>
            <person name="Petit E.L."/>
            <person name="LaTouf W.G."/>
            <person name="Copeland A."/>
            <person name="Lucas S."/>
            <person name="Lapidus A."/>
            <person name="Barry K."/>
            <person name="Glavina del Rio T."/>
            <person name="Dalin E."/>
            <person name="Tice H."/>
            <person name="Pitluck S."/>
            <person name="Kiss H."/>
            <person name="Brettin T."/>
            <person name="Bruce D."/>
            <person name="Detter J.C."/>
            <person name="Han C."/>
            <person name="Kuske C."/>
            <person name="Schmutz J."/>
            <person name="Larimer F."/>
            <person name="Land M."/>
            <person name="Hauser L."/>
            <person name="Kyrpides N."/>
            <person name="Kim E.A."/>
            <person name="Richardson P."/>
        </authorList>
    </citation>
    <scope>NUCLEOTIDE SEQUENCE [LARGE SCALE GENOMIC DNA]</scope>
    <source>
        <strain>ATCC 700394 / DSM 18823 / ISDg</strain>
    </source>
</reference>
<proteinExistence type="inferred from homology"/>
<organism>
    <name type="scientific">Lachnoclostridium phytofermentans (strain ATCC 700394 / DSM 18823 / ISDg)</name>
    <name type="common">Clostridium phytofermentans</name>
    <dbReference type="NCBI Taxonomy" id="357809"/>
    <lineage>
        <taxon>Bacteria</taxon>
        <taxon>Bacillati</taxon>
        <taxon>Bacillota</taxon>
        <taxon>Clostridia</taxon>
        <taxon>Lachnospirales</taxon>
        <taxon>Lachnospiraceae</taxon>
    </lineage>
</organism>
<accession>A9KT78</accession>
<gene>
    <name evidence="1" type="primary">leuD</name>
    <name type="ordered locus">Cphy_3355</name>
</gene>
<sequence length="165" mass="18218">MKSHGIVHKYGDNVDTDVIIPARYLNSSDPKELAKKCMEDIDKEFVNRVNLGDIMVANKNFGCGSSREHAPIAIKASGISCVIAETFARIFYRNAINIGLPIIECKEAARDIDAGNEVEIDFDSGIITNLTKGTSYQGQAFPEFMQKIMKADGLINYINEQLEAV</sequence>
<evidence type="ECO:0000255" key="1">
    <source>
        <dbReference type="HAMAP-Rule" id="MF_01032"/>
    </source>
</evidence>
<dbReference type="EC" id="4.2.1.33" evidence="1"/>
<dbReference type="EMBL" id="CP000885">
    <property type="protein sequence ID" value="ABX43708.1"/>
    <property type="molecule type" value="Genomic_DNA"/>
</dbReference>
<dbReference type="RefSeq" id="WP_012201357.1">
    <property type="nucleotide sequence ID" value="NC_010001.1"/>
</dbReference>
<dbReference type="SMR" id="A9KT78"/>
<dbReference type="STRING" id="357809.Cphy_3355"/>
<dbReference type="KEGG" id="cpy:Cphy_3355"/>
<dbReference type="eggNOG" id="COG0066">
    <property type="taxonomic scope" value="Bacteria"/>
</dbReference>
<dbReference type="HOGENOM" id="CLU_081378_1_1_9"/>
<dbReference type="OrthoDB" id="9777465at2"/>
<dbReference type="UniPathway" id="UPA00048">
    <property type="reaction ID" value="UER00071"/>
</dbReference>
<dbReference type="Proteomes" id="UP000000370">
    <property type="component" value="Chromosome"/>
</dbReference>
<dbReference type="GO" id="GO:0003861">
    <property type="term" value="F:3-isopropylmalate dehydratase activity"/>
    <property type="evidence" value="ECO:0007669"/>
    <property type="project" value="UniProtKB-UniRule"/>
</dbReference>
<dbReference type="GO" id="GO:0009098">
    <property type="term" value="P:L-leucine biosynthetic process"/>
    <property type="evidence" value="ECO:0007669"/>
    <property type="project" value="UniProtKB-UniRule"/>
</dbReference>
<dbReference type="CDD" id="cd01577">
    <property type="entry name" value="IPMI_Swivel"/>
    <property type="match status" value="1"/>
</dbReference>
<dbReference type="FunFam" id="3.20.19.10:FF:000007">
    <property type="entry name" value="Isopropylmalate/citramalate isomerase small subunit"/>
    <property type="match status" value="1"/>
</dbReference>
<dbReference type="Gene3D" id="3.20.19.10">
    <property type="entry name" value="Aconitase, domain 4"/>
    <property type="match status" value="1"/>
</dbReference>
<dbReference type="HAMAP" id="MF_01032">
    <property type="entry name" value="LeuD_type2"/>
    <property type="match status" value="1"/>
</dbReference>
<dbReference type="InterPro" id="IPR015928">
    <property type="entry name" value="Aconitase/3IPM_dehydase_swvl"/>
</dbReference>
<dbReference type="InterPro" id="IPR000573">
    <property type="entry name" value="AconitaseA/IPMdHydase_ssu_swvl"/>
</dbReference>
<dbReference type="InterPro" id="IPR033940">
    <property type="entry name" value="IPMI_Swivel"/>
</dbReference>
<dbReference type="InterPro" id="IPR050075">
    <property type="entry name" value="LeuD"/>
</dbReference>
<dbReference type="InterPro" id="IPR011824">
    <property type="entry name" value="LeuD/DmdB_bac"/>
</dbReference>
<dbReference type="InterPro" id="IPR011827">
    <property type="entry name" value="LeuD_type2/HacB/DmdB"/>
</dbReference>
<dbReference type="NCBIfam" id="TIGR02084">
    <property type="entry name" value="leud"/>
    <property type="match status" value="1"/>
</dbReference>
<dbReference type="NCBIfam" id="TIGR02087">
    <property type="entry name" value="LEUD_arch"/>
    <property type="match status" value="1"/>
</dbReference>
<dbReference type="PANTHER" id="PTHR43345:SF2">
    <property type="entry name" value="3-ISOPROPYLMALATE DEHYDRATASE SMALL SUBUNIT 1"/>
    <property type="match status" value="1"/>
</dbReference>
<dbReference type="PANTHER" id="PTHR43345">
    <property type="entry name" value="3-ISOPROPYLMALATE DEHYDRATASE SMALL SUBUNIT 2-RELATED-RELATED"/>
    <property type="match status" value="1"/>
</dbReference>
<dbReference type="Pfam" id="PF00694">
    <property type="entry name" value="Aconitase_C"/>
    <property type="match status" value="1"/>
</dbReference>
<dbReference type="SUPFAM" id="SSF52016">
    <property type="entry name" value="LeuD/IlvD-like"/>
    <property type="match status" value="1"/>
</dbReference>
<keyword id="KW-0028">Amino-acid biosynthesis</keyword>
<keyword id="KW-0100">Branched-chain amino acid biosynthesis</keyword>
<keyword id="KW-0432">Leucine biosynthesis</keyword>
<keyword id="KW-0456">Lyase</keyword>
<keyword id="KW-1185">Reference proteome</keyword>
<name>LEUD_LACP7</name>
<feature type="chain" id="PRO_1000135848" description="3-isopropylmalate dehydratase small subunit">
    <location>
        <begin position="1"/>
        <end position="165"/>
    </location>
</feature>
<comment type="function">
    <text evidence="1">Catalyzes the isomerization between 2-isopropylmalate and 3-isopropylmalate, via the formation of 2-isopropylmaleate.</text>
</comment>
<comment type="catalytic activity">
    <reaction evidence="1">
        <text>(2R,3S)-3-isopropylmalate = (2S)-2-isopropylmalate</text>
        <dbReference type="Rhea" id="RHEA:32287"/>
        <dbReference type="ChEBI" id="CHEBI:1178"/>
        <dbReference type="ChEBI" id="CHEBI:35121"/>
        <dbReference type="EC" id="4.2.1.33"/>
    </reaction>
</comment>
<comment type="pathway">
    <text evidence="1">Amino-acid biosynthesis; L-leucine biosynthesis; L-leucine from 3-methyl-2-oxobutanoate: step 2/4.</text>
</comment>
<comment type="subunit">
    <text evidence="1">Heterodimer of LeuC and LeuD.</text>
</comment>
<comment type="similarity">
    <text evidence="1">Belongs to the LeuD family. LeuD type 2 subfamily.</text>
</comment>
<protein>
    <recommendedName>
        <fullName evidence="1">3-isopropylmalate dehydratase small subunit</fullName>
        <ecNumber evidence="1">4.2.1.33</ecNumber>
    </recommendedName>
    <alternativeName>
        <fullName evidence="1">Alpha-IPM isomerase</fullName>
        <shortName evidence="1">IPMI</shortName>
    </alternativeName>
    <alternativeName>
        <fullName evidence="1">Isopropylmalate isomerase</fullName>
    </alternativeName>
</protein>